<organism>
    <name type="scientific">Lactobacillus johnsonii (strain CNCM I-12250 / La1 / NCC 533)</name>
    <dbReference type="NCBI Taxonomy" id="257314"/>
    <lineage>
        <taxon>Bacteria</taxon>
        <taxon>Bacillati</taxon>
        <taxon>Bacillota</taxon>
        <taxon>Bacilli</taxon>
        <taxon>Lactobacillales</taxon>
        <taxon>Lactobacillaceae</taxon>
        <taxon>Lactobacillus</taxon>
    </lineage>
</organism>
<accession>Q74JY0</accession>
<name>SEPF_LACJO</name>
<protein>
    <recommendedName>
        <fullName evidence="1">Cell division protein SepF</fullName>
    </recommendedName>
</protein>
<dbReference type="EMBL" id="AE017198">
    <property type="protein sequence ID" value="AAS08797.1"/>
    <property type="molecule type" value="Genomic_DNA"/>
</dbReference>
<dbReference type="RefSeq" id="WP_004897575.1">
    <property type="nucleotide sequence ID" value="NC_005362.1"/>
</dbReference>
<dbReference type="SMR" id="Q74JY0"/>
<dbReference type="DNASU" id="2742950"/>
<dbReference type="KEGG" id="ljo:LJ_0976"/>
<dbReference type="eggNOG" id="COG1799">
    <property type="taxonomic scope" value="Bacteria"/>
</dbReference>
<dbReference type="HOGENOM" id="CLU_078499_4_1_9"/>
<dbReference type="Proteomes" id="UP000000581">
    <property type="component" value="Chromosome"/>
</dbReference>
<dbReference type="GO" id="GO:0005737">
    <property type="term" value="C:cytoplasm"/>
    <property type="evidence" value="ECO:0007669"/>
    <property type="project" value="UniProtKB-SubCell"/>
</dbReference>
<dbReference type="GO" id="GO:0000917">
    <property type="term" value="P:division septum assembly"/>
    <property type="evidence" value="ECO:0007669"/>
    <property type="project" value="UniProtKB-KW"/>
</dbReference>
<dbReference type="GO" id="GO:0043093">
    <property type="term" value="P:FtsZ-dependent cytokinesis"/>
    <property type="evidence" value="ECO:0007669"/>
    <property type="project" value="UniProtKB-UniRule"/>
</dbReference>
<dbReference type="Gene3D" id="3.30.110.150">
    <property type="entry name" value="SepF-like protein"/>
    <property type="match status" value="1"/>
</dbReference>
<dbReference type="HAMAP" id="MF_01197">
    <property type="entry name" value="SepF"/>
    <property type="match status" value="1"/>
</dbReference>
<dbReference type="InterPro" id="IPR023052">
    <property type="entry name" value="Cell_div_SepF"/>
</dbReference>
<dbReference type="InterPro" id="IPR007561">
    <property type="entry name" value="Cell_div_SepF/SepF-rel"/>
</dbReference>
<dbReference type="InterPro" id="IPR038594">
    <property type="entry name" value="SepF-like_sf"/>
</dbReference>
<dbReference type="PANTHER" id="PTHR35798">
    <property type="entry name" value="CELL DIVISION PROTEIN SEPF"/>
    <property type="match status" value="1"/>
</dbReference>
<dbReference type="PANTHER" id="PTHR35798:SF1">
    <property type="entry name" value="CELL DIVISION PROTEIN SEPF"/>
    <property type="match status" value="1"/>
</dbReference>
<dbReference type="Pfam" id="PF04472">
    <property type="entry name" value="SepF"/>
    <property type="match status" value="1"/>
</dbReference>
<reference key="1">
    <citation type="journal article" date="2004" name="Proc. Natl. Acad. Sci. U.S.A.">
        <title>The genome sequence of the probiotic intestinal bacterium Lactobacillus johnsonii NCC 533.</title>
        <authorList>
            <person name="Pridmore R.D."/>
            <person name="Berger B."/>
            <person name="Desiere F."/>
            <person name="Vilanova D."/>
            <person name="Barretto C."/>
            <person name="Pittet A.-C."/>
            <person name="Zwahlen M.-C."/>
            <person name="Rouvet M."/>
            <person name="Altermann E."/>
            <person name="Barrangou R."/>
            <person name="Mollet B."/>
            <person name="Mercenier A."/>
            <person name="Klaenhammer T."/>
            <person name="Arigoni F."/>
            <person name="Schell M.A."/>
        </authorList>
    </citation>
    <scope>NUCLEOTIDE SEQUENCE [LARGE SCALE GENOMIC DNA]</scope>
    <source>
        <strain>CNCM I-1225 / La1 / NCC 533</strain>
    </source>
</reference>
<comment type="function">
    <text evidence="1">Cell division protein that is part of the divisome complex and is recruited early to the Z-ring. Probably stimulates Z-ring formation, perhaps through the cross-linking of FtsZ protofilaments. Its function overlaps with FtsA.</text>
</comment>
<comment type="subunit">
    <text evidence="1">Homodimer. Interacts with FtsZ.</text>
</comment>
<comment type="subcellular location">
    <subcellularLocation>
        <location evidence="1">Cytoplasm</location>
    </subcellularLocation>
    <text evidence="1">Localizes to the division site, in a FtsZ-dependent manner.</text>
</comment>
<comment type="similarity">
    <text evidence="1">Belongs to the SepF family.</text>
</comment>
<sequence length="144" mass="16351">MAFDKLGRFFGISEDDEMNEVPYTESEEQQEEIPQTQKNERRANVVSINSGVSATSKIVLYEPRVYSDAKEVAQNLLNNKAVIINFARMDDEQARRIVDFITGTVYALNGEIQRVGDKIFLATPPKFETDGKIAELVEKKDKMD</sequence>
<keyword id="KW-0131">Cell cycle</keyword>
<keyword id="KW-0132">Cell division</keyword>
<keyword id="KW-0963">Cytoplasm</keyword>
<keyword id="KW-0717">Septation</keyword>
<evidence type="ECO:0000255" key="1">
    <source>
        <dbReference type="HAMAP-Rule" id="MF_01197"/>
    </source>
</evidence>
<evidence type="ECO:0000256" key="2">
    <source>
        <dbReference type="SAM" id="MobiDB-lite"/>
    </source>
</evidence>
<proteinExistence type="inferred from homology"/>
<gene>
    <name evidence="1" type="primary">sepF</name>
    <name type="ordered locus">LJ_0976</name>
</gene>
<feature type="chain" id="PRO_0000334022" description="Cell division protein SepF">
    <location>
        <begin position="1"/>
        <end position="144"/>
    </location>
</feature>
<feature type="region of interest" description="Disordered" evidence="2">
    <location>
        <begin position="14"/>
        <end position="41"/>
    </location>
</feature>
<feature type="compositionally biased region" description="Acidic residues" evidence="2">
    <location>
        <begin position="14"/>
        <end position="31"/>
    </location>
</feature>